<organism>
    <name type="scientific">Mycoplasmopsis pulmonis (strain UAB CTIP)</name>
    <name type="common">Mycoplasma pulmonis</name>
    <dbReference type="NCBI Taxonomy" id="272635"/>
    <lineage>
        <taxon>Bacteria</taxon>
        <taxon>Bacillati</taxon>
        <taxon>Mycoplasmatota</taxon>
        <taxon>Mycoplasmoidales</taxon>
        <taxon>Metamycoplasmataceae</taxon>
        <taxon>Mycoplasmopsis</taxon>
    </lineage>
</organism>
<sequence length="137" mass="15150">MPTINQLVTKGRKRKASKTKSPALNQSYNSLHKKYKKLSAPFKRGVCTRVATMTPKKPNSALRKYARVKLSNGMEVTAYIPGEGHNLQEHSVVLIKGASVKDLPGVRYSIIRGTQDAAGVNKRNQARSRYGAKKAKK</sequence>
<protein>
    <recommendedName>
        <fullName evidence="1">Small ribosomal subunit protein uS12</fullName>
    </recommendedName>
    <alternativeName>
        <fullName evidence="3">30S ribosomal protein S12</fullName>
    </alternativeName>
</protein>
<feature type="chain" id="PRO_0000146269" description="Small ribosomal subunit protein uS12">
    <location>
        <begin position="1"/>
        <end position="137"/>
    </location>
</feature>
<feature type="region of interest" description="Disordered" evidence="2">
    <location>
        <begin position="1"/>
        <end position="26"/>
    </location>
</feature>
<comment type="function">
    <text evidence="1">With S4 and S5 plays an important role in translational accuracy.</text>
</comment>
<comment type="function">
    <text evidence="1">Interacts with and stabilizes bases of the 16S rRNA that are involved in tRNA selection in the A site and with the mRNA backbone. Located at the interface of the 30S and 50S subunits, it traverses the body of the 30S subunit contacting proteins on the other side and probably holding the rRNA structure together. The combined cluster of proteins S8, S12 and S17 appears to hold together the shoulder and platform of the 30S subunit.</text>
</comment>
<comment type="subunit">
    <text evidence="1">Part of the 30S ribosomal subunit. Contacts proteins S8 and S17. May interact with IF1 in the 30S initiation complex.</text>
</comment>
<comment type="similarity">
    <text evidence="1">Belongs to the universal ribosomal protein uS12 family.</text>
</comment>
<comment type="caution">
    <text evidence="3">Because the enzyme that would modify Asp-102 to 3-methylthioaspartic acid has not been found in the proteome of this organism, that modification is not predicted.</text>
</comment>
<proteinExistence type="inferred from homology"/>
<reference key="1">
    <citation type="journal article" date="2001" name="Nucleic Acids Res.">
        <title>The complete genome sequence of the murine respiratory pathogen Mycoplasma pulmonis.</title>
        <authorList>
            <person name="Chambaud I."/>
            <person name="Heilig R."/>
            <person name="Ferris S."/>
            <person name="Barbe V."/>
            <person name="Samson D."/>
            <person name="Galisson F."/>
            <person name="Moszer I."/>
            <person name="Dybvig K."/>
            <person name="Wroblewski H."/>
            <person name="Viari A."/>
            <person name="Rocha E.P.C."/>
            <person name="Blanchard A."/>
        </authorList>
    </citation>
    <scope>NUCLEOTIDE SEQUENCE [LARGE SCALE GENOMIC DNA]</scope>
    <source>
        <strain>UAB CTIP</strain>
    </source>
</reference>
<keyword id="KW-1185">Reference proteome</keyword>
<keyword id="KW-0687">Ribonucleoprotein</keyword>
<keyword id="KW-0689">Ribosomal protein</keyword>
<keyword id="KW-0694">RNA-binding</keyword>
<keyword id="KW-0699">rRNA-binding</keyword>
<keyword id="KW-0820">tRNA-binding</keyword>
<name>RS12_MYCPU</name>
<gene>
    <name evidence="1" type="primary">rpsL</name>
    <name type="ordered locus">MYPU_4300</name>
</gene>
<dbReference type="EMBL" id="AL445564">
    <property type="protein sequence ID" value="CAC13603.1"/>
    <property type="molecule type" value="Genomic_DNA"/>
</dbReference>
<dbReference type="PIR" id="F90565">
    <property type="entry name" value="F90565"/>
</dbReference>
<dbReference type="RefSeq" id="WP_010925231.1">
    <property type="nucleotide sequence ID" value="NC_002771.1"/>
</dbReference>
<dbReference type="SMR" id="Q98QD6"/>
<dbReference type="STRING" id="272635.gene:17577030"/>
<dbReference type="KEGG" id="mpu:MYPU_4300"/>
<dbReference type="eggNOG" id="COG0048">
    <property type="taxonomic scope" value="Bacteria"/>
</dbReference>
<dbReference type="HOGENOM" id="CLU_104295_1_1_14"/>
<dbReference type="BioCyc" id="MPUL272635:G1GT6-434-MONOMER"/>
<dbReference type="Proteomes" id="UP000000528">
    <property type="component" value="Chromosome"/>
</dbReference>
<dbReference type="GO" id="GO:0015935">
    <property type="term" value="C:small ribosomal subunit"/>
    <property type="evidence" value="ECO:0007669"/>
    <property type="project" value="InterPro"/>
</dbReference>
<dbReference type="GO" id="GO:0019843">
    <property type="term" value="F:rRNA binding"/>
    <property type="evidence" value="ECO:0007669"/>
    <property type="project" value="UniProtKB-UniRule"/>
</dbReference>
<dbReference type="GO" id="GO:0003735">
    <property type="term" value="F:structural constituent of ribosome"/>
    <property type="evidence" value="ECO:0007669"/>
    <property type="project" value="InterPro"/>
</dbReference>
<dbReference type="GO" id="GO:0000049">
    <property type="term" value="F:tRNA binding"/>
    <property type="evidence" value="ECO:0007669"/>
    <property type="project" value="UniProtKB-UniRule"/>
</dbReference>
<dbReference type="GO" id="GO:0006412">
    <property type="term" value="P:translation"/>
    <property type="evidence" value="ECO:0007669"/>
    <property type="project" value="UniProtKB-UniRule"/>
</dbReference>
<dbReference type="CDD" id="cd03368">
    <property type="entry name" value="Ribosomal_S12"/>
    <property type="match status" value="1"/>
</dbReference>
<dbReference type="FunFam" id="2.40.50.140:FF:000099">
    <property type="entry name" value="Ribosomal protein S12, mitochondrial"/>
    <property type="match status" value="1"/>
</dbReference>
<dbReference type="Gene3D" id="2.40.50.140">
    <property type="entry name" value="Nucleic acid-binding proteins"/>
    <property type="match status" value="1"/>
</dbReference>
<dbReference type="HAMAP" id="MF_00403_B">
    <property type="entry name" value="Ribosomal_uS12_B"/>
    <property type="match status" value="1"/>
</dbReference>
<dbReference type="InterPro" id="IPR012340">
    <property type="entry name" value="NA-bd_OB-fold"/>
</dbReference>
<dbReference type="InterPro" id="IPR006032">
    <property type="entry name" value="Ribosomal_uS12"/>
</dbReference>
<dbReference type="InterPro" id="IPR005679">
    <property type="entry name" value="Ribosomal_uS12_bac"/>
</dbReference>
<dbReference type="NCBIfam" id="TIGR00981">
    <property type="entry name" value="rpsL_bact"/>
    <property type="match status" value="1"/>
</dbReference>
<dbReference type="PANTHER" id="PTHR11652">
    <property type="entry name" value="30S RIBOSOMAL PROTEIN S12 FAMILY MEMBER"/>
    <property type="match status" value="1"/>
</dbReference>
<dbReference type="Pfam" id="PF00164">
    <property type="entry name" value="Ribosom_S12_S23"/>
    <property type="match status" value="1"/>
</dbReference>
<dbReference type="PIRSF" id="PIRSF002133">
    <property type="entry name" value="Ribosomal_S12/S23"/>
    <property type="match status" value="1"/>
</dbReference>
<dbReference type="PRINTS" id="PR01034">
    <property type="entry name" value="RIBOSOMALS12"/>
</dbReference>
<dbReference type="SUPFAM" id="SSF50249">
    <property type="entry name" value="Nucleic acid-binding proteins"/>
    <property type="match status" value="1"/>
</dbReference>
<dbReference type="PROSITE" id="PS00055">
    <property type="entry name" value="RIBOSOMAL_S12"/>
    <property type="match status" value="1"/>
</dbReference>
<evidence type="ECO:0000255" key="1">
    <source>
        <dbReference type="HAMAP-Rule" id="MF_00403"/>
    </source>
</evidence>
<evidence type="ECO:0000256" key="2">
    <source>
        <dbReference type="SAM" id="MobiDB-lite"/>
    </source>
</evidence>
<evidence type="ECO:0000305" key="3"/>
<accession>Q98QD6</accession>